<proteinExistence type="inferred from homology"/>
<comment type="function">
    <text evidence="1">Produces ATP from ADP in the presence of a proton gradient across the membrane. The alpha chain is a regulatory subunit.</text>
</comment>
<comment type="catalytic activity">
    <reaction evidence="1">
        <text>ATP + H2O + 4 H(+)(in) = ADP + phosphate + 5 H(+)(out)</text>
        <dbReference type="Rhea" id="RHEA:57720"/>
        <dbReference type="ChEBI" id="CHEBI:15377"/>
        <dbReference type="ChEBI" id="CHEBI:15378"/>
        <dbReference type="ChEBI" id="CHEBI:30616"/>
        <dbReference type="ChEBI" id="CHEBI:43474"/>
        <dbReference type="ChEBI" id="CHEBI:456216"/>
        <dbReference type="EC" id="7.1.2.2"/>
    </reaction>
</comment>
<comment type="subunit">
    <text evidence="1">F-type ATPases have 2 components, CF(1) - the catalytic core - and CF(0) - the membrane proton channel. CF(1) has five subunits: alpha(3), beta(3), gamma(1), delta(1), epsilon(1). CF(0) has three main subunits: a(1), b(2) and c(9-12). The alpha and beta chains form an alternating ring which encloses part of the gamma chain. CF(1) is attached to CF(0) by a central stalk formed by the gamma and epsilon chains, while a peripheral stalk is formed by the delta and b chains.</text>
</comment>
<comment type="subcellular location">
    <subcellularLocation>
        <location evidence="1">Cell inner membrane</location>
        <topology evidence="1">Peripheral membrane protein</topology>
    </subcellularLocation>
</comment>
<comment type="similarity">
    <text evidence="1">Belongs to the ATPase alpha/beta chains family.</text>
</comment>
<protein>
    <recommendedName>
        <fullName evidence="1">ATP synthase subunit alpha</fullName>
        <ecNumber evidence="1">7.1.2.2</ecNumber>
    </recommendedName>
    <alternativeName>
        <fullName evidence="1">ATP synthase F1 sector subunit alpha</fullName>
    </alternativeName>
    <alternativeName>
        <fullName evidence="1">F-ATPase subunit alpha</fullName>
    </alternativeName>
</protein>
<organism>
    <name type="scientific">Cupriavidus metallidurans (strain ATCC 43123 / DSM 2839 / NBRC 102507 / CH34)</name>
    <name type="common">Ralstonia metallidurans</name>
    <dbReference type="NCBI Taxonomy" id="266264"/>
    <lineage>
        <taxon>Bacteria</taxon>
        <taxon>Pseudomonadati</taxon>
        <taxon>Pseudomonadota</taxon>
        <taxon>Betaproteobacteria</taxon>
        <taxon>Burkholderiales</taxon>
        <taxon>Burkholderiaceae</taxon>
        <taxon>Cupriavidus</taxon>
    </lineage>
</organism>
<feature type="chain" id="PRO_0000256101" description="ATP synthase subunit alpha">
    <location>
        <begin position="1"/>
        <end position="513"/>
    </location>
</feature>
<feature type="binding site" evidence="1">
    <location>
        <begin position="169"/>
        <end position="176"/>
    </location>
    <ligand>
        <name>ATP</name>
        <dbReference type="ChEBI" id="CHEBI:30616"/>
    </ligand>
</feature>
<feature type="site" description="Required for activity" evidence="1">
    <location>
        <position position="373"/>
    </location>
</feature>
<gene>
    <name evidence="1" type="primary">atpA</name>
    <name type="ordered locus">Rmet_3496</name>
</gene>
<reference key="1">
    <citation type="journal article" date="2010" name="PLoS ONE">
        <title>The complete genome sequence of Cupriavidus metallidurans strain CH34, a master survivalist in harsh and anthropogenic environments.</title>
        <authorList>
            <person name="Janssen P.J."/>
            <person name="Van Houdt R."/>
            <person name="Moors H."/>
            <person name="Monsieurs P."/>
            <person name="Morin N."/>
            <person name="Michaux A."/>
            <person name="Benotmane M.A."/>
            <person name="Leys N."/>
            <person name="Vallaeys T."/>
            <person name="Lapidus A."/>
            <person name="Monchy S."/>
            <person name="Medigue C."/>
            <person name="Taghavi S."/>
            <person name="McCorkle S."/>
            <person name="Dunn J."/>
            <person name="van der Lelie D."/>
            <person name="Mergeay M."/>
        </authorList>
    </citation>
    <scope>NUCLEOTIDE SEQUENCE [LARGE SCALE GENOMIC DNA]</scope>
    <source>
        <strain>ATCC 43123 / DSM 2839 / NBRC 102507 / CH34</strain>
    </source>
</reference>
<keyword id="KW-0066">ATP synthesis</keyword>
<keyword id="KW-0067">ATP-binding</keyword>
<keyword id="KW-0997">Cell inner membrane</keyword>
<keyword id="KW-1003">Cell membrane</keyword>
<keyword id="KW-0139">CF(1)</keyword>
<keyword id="KW-0375">Hydrogen ion transport</keyword>
<keyword id="KW-0406">Ion transport</keyword>
<keyword id="KW-0472">Membrane</keyword>
<keyword id="KW-0547">Nucleotide-binding</keyword>
<keyword id="KW-1185">Reference proteome</keyword>
<keyword id="KW-1278">Translocase</keyword>
<keyword id="KW-0813">Transport</keyword>
<dbReference type="EC" id="7.1.2.2" evidence="1"/>
<dbReference type="EMBL" id="CP000352">
    <property type="protein sequence ID" value="ABF10368.1"/>
    <property type="molecule type" value="Genomic_DNA"/>
</dbReference>
<dbReference type="RefSeq" id="WP_011517923.1">
    <property type="nucleotide sequence ID" value="NC_007973.1"/>
</dbReference>
<dbReference type="SMR" id="Q1LHK8"/>
<dbReference type="STRING" id="266264.Rmet_3496"/>
<dbReference type="KEGG" id="rme:Rmet_3496"/>
<dbReference type="eggNOG" id="COG0056">
    <property type="taxonomic scope" value="Bacteria"/>
</dbReference>
<dbReference type="HOGENOM" id="CLU_010091_2_1_4"/>
<dbReference type="Proteomes" id="UP000002429">
    <property type="component" value="Chromosome"/>
</dbReference>
<dbReference type="GO" id="GO:0005886">
    <property type="term" value="C:plasma membrane"/>
    <property type="evidence" value="ECO:0007669"/>
    <property type="project" value="UniProtKB-SubCell"/>
</dbReference>
<dbReference type="GO" id="GO:0045259">
    <property type="term" value="C:proton-transporting ATP synthase complex"/>
    <property type="evidence" value="ECO:0007669"/>
    <property type="project" value="UniProtKB-KW"/>
</dbReference>
<dbReference type="GO" id="GO:0043531">
    <property type="term" value="F:ADP binding"/>
    <property type="evidence" value="ECO:0007669"/>
    <property type="project" value="TreeGrafter"/>
</dbReference>
<dbReference type="GO" id="GO:0005524">
    <property type="term" value="F:ATP binding"/>
    <property type="evidence" value="ECO:0007669"/>
    <property type="project" value="UniProtKB-UniRule"/>
</dbReference>
<dbReference type="GO" id="GO:0046933">
    <property type="term" value="F:proton-transporting ATP synthase activity, rotational mechanism"/>
    <property type="evidence" value="ECO:0007669"/>
    <property type="project" value="UniProtKB-UniRule"/>
</dbReference>
<dbReference type="CDD" id="cd18113">
    <property type="entry name" value="ATP-synt_F1_alpha_C"/>
    <property type="match status" value="1"/>
</dbReference>
<dbReference type="CDD" id="cd18116">
    <property type="entry name" value="ATP-synt_F1_alpha_N"/>
    <property type="match status" value="1"/>
</dbReference>
<dbReference type="CDD" id="cd01132">
    <property type="entry name" value="F1-ATPase_alpha_CD"/>
    <property type="match status" value="1"/>
</dbReference>
<dbReference type="FunFam" id="1.20.150.20:FF:000001">
    <property type="entry name" value="ATP synthase subunit alpha"/>
    <property type="match status" value="1"/>
</dbReference>
<dbReference type="FunFam" id="2.40.30.20:FF:000001">
    <property type="entry name" value="ATP synthase subunit alpha"/>
    <property type="match status" value="1"/>
</dbReference>
<dbReference type="FunFam" id="3.40.50.300:FF:000002">
    <property type="entry name" value="ATP synthase subunit alpha"/>
    <property type="match status" value="1"/>
</dbReference>
<dbReference type="Gene3D" id="2.40.30.20">
    <property type="match status" value="1"/>
</dbReference>
<dbReference type="Gene3D" id="1.20.150.20">
    <property type="entry name" value="ATP synthase alpha/beta chain, C-terminal domain"/>
    <property type="match status" value="1"/>
</dbReference>
<dbReference type="Gene3D" id="3.40.50.300">
    <property type="entry name" value="P-loop containing nucleotide triphosphate hydrolases"/>
    <property type="match status" value="1"/>
</dbReference>
<dbReference type="HAMAP" id="MF_01346">
    <property type="entry name" value="ATP_synth_alpha_bact"/>
    <property type="match status" value="1"/>
</dbReference>
<dbReference type="InterPro" id="IPR023366">
    <property type="entry name" value="ATP_synth_asu-like_sf"/>
</dbReference>
<dbReference type="InterPro" id="IPR000793">
    <property type="entry name" value="ATP_synth_asu_C"/>
</dbReference>
<dbReference type="InterPro" id="IPR038376">
    <property type="entry name" value="ATP_synth_asu_C_sf"/>
</dbReference>
<dbReference type="InterPro" id="IPR033732">
    <property type="entry name" value="ATP_synth_F1_a_nt-bd_dom"/>
</dbReference>
<dbReference type="InterPro" id="IPR005294">
    <property type="entry name" value="ATP_synth_F1_asu"/>
</dbReference>
<dbReference type="InterPro" id="IPR020003">
    <property type="entry name" value="ATPase_a/bsu_AS"/>
</dbReference>
<dbReference type="InterPro" id="IPR004100">
    <property type="entry name" value="ATPase_F1/V1/A1_a/bsu_N"/>
</dbReference>
<dbReference type="InterPro" id="IPR036121">
    <property type="entry name" value="ATPase_F1/V1/A1_a/bsu_N_sf"/>
</dbReference>
<dbReference type="InterPro" id="IPR000194">
    <property type="entry name" value="ATPase_F1/V1/A1_a/bsu_nucl-bd"/>
</dbReference>
<dbReference type="InterPro" id="IPR027417">
    <property type="entry name" value="P-loop_NTPase"/>
</dbReference>
<dbReference type="NCBIfam" id="TIGR00962">
    <property type="entry name" value="atpA"/>
    <property type="match status" value="1"/>
</dbReference>
<dbReference type="NCBIfam" id="NF009884">
    <property type="entry name" value="PRK13343.1"/>
    <property type="match status" value="1"/>
</dbReference>
<dbReference type="PANTHER" id="PTHR48082">
    <property type="entry name" value="ATP SYNTHASE SUBUNIT ALPHA, MITOCHONDRIAL"/>
    <property type="match status" value="1"/>
</dbReference>
<dbReference type="PANTHER" id="PTHR48082:SF2">
    <property type="entry name" value="ATP SYNTHASE SUBUNIT ALPHA, MITOCHONDRIAL"/>
    <property type="match status" value="1"/>
</dbReference>
<dbReference type="Pfam" id="PF00006">
    <property type="entry name" value="ATP-synt_ab"/>
    <property type="match status" value="1"/>
</dbReference>
<dbReference type="Pfam" id="PF00306">
    <property type="entry name" value="ATP-synt_ab_C"/>
    <property type="match status" value="1"/>
</dbReference>
<dbReference type="Pfam" id="PF02874">
    <property type="entry name" value="ATP-synt_ab_N"/>
    <property type="match status" value="1"/>
</dbReference>
<dbReference type="PIRSF" id="PIRSF039088">
    <property type="entry name" value="F_ATPase_subunit_alpha"/>
    <property type="match status" value="1"/>
</dbReference>
<dbReference type="SUPFAM" id="SSF47917">
    <property type="entry name" value="C-terminal domain of alpha and beta subunits of F1 ATP synthase"/>
    <property type="match status" value="1"/>
</dbReference>
<dbReference type="SUPFAM" id="SSF50615">
    <property type="entry name" value="N-terminal domain of alpha and beta subunits of F1 ATP synthase"/>
    <property type="match status" value="1"/>
</dbReference>
<dbReference type="SUPFAM" id="SSF52540">
    <property type="entry name" value="P-loop containing nucleoside triphosphate hydrolases"/>
    <property type="match status" value="1"/>
</dbReference>
<dbReference type="PROSITE" id="PS00152">
    <property type="entry name" value="ATPASE_ALPHA_BETA"/>
    <property type="match status" value="1"/>
</dbReference>
<accession>Q1LHK8</accession>
<sequence length="513" mass="55473">MQLNPSEISELIKSRISGLGADAEVRNTGTVISVTDGICRVHGLSGVMQGEMLEFPGNTYGLALNLERDSVGAVVLGEYEHISEGDTVKCTGRILEVPVGKELLGRVVNTLGQPIDGKGPINAKETDVIEKVAPGVIARQSVSQPVQTGLKSIDAMVPIGRGQRELIIGDRQTGKTAVAVDSIINQKGKGVFCVYVAIGQKASTISNVVRKLEEHGAMEYTIVVAATASDSAAMQYLAAYAGCTMGEYFRDRGEDALIVYDDLTKQAWAYRQVSLLLRRPPGREAYPGDVFYLHSRLLERAARVNEDYVAKFTNGAVTGKTGSLTALPVIETQAGDVSAFVPTNVISITDGQIFLETDLFNAGIRPAINAGISVSRVGGAAQTKVIKKLSGGIRTDLAQYRELAAFAQFASDLDDATRKQLERGRRVTELLKQPQYQPLQVWQLAASLYAANNGFLDNVDVKDILPFEKGLHDHLKTKFADLVNRIEDTKDLSKEDEAALRAAIEDFRKSAAF</sequence>
<name>ATPA_CUPMC</name>
<evidence type="ECO:0000255" key="1">
    <source>
        <dbReference type="HAMAP-Rule" id="MF_01346"/>
    </source>
</evidence>